<evidence type="ECO:0000255" key="1"/>
<evidence type="ECO:0000305" key="2"/>
<evidence type="ECO:0000305" key="3">
    <source>
    </source>
</evidence>
<keyword id="KW-1003">Cell membrane</keyword>
<keyword id="KW-0472">Membrane</keyword>
<keyword id="KW-1185">Reference proteome</keyword>
<keyword id="KW-0812">Transmembrane</keyword>
<keyword id="KW-1133">Transmembrane helix</keyword>
<feature type="chain" id="PRO_0000166309" description="UPF0126 membrane protein VC_2382">
    <location>
        <begin position="1"/>
        <end position="239"/>
    </location>
</feature>
<feature type="transmembrane region" description="Helical" evidence="1">
    <location>
        <begin position="38"/>
        <end position="58"/>
    </location>
</feature>
<feature type="transmembrane region" description="Helical" evidence="1">
    <location>
        <begin position="62"/>
        <end position="82"/>
    </location>
</feature>
<feature type="transmembrane region" description="Helical" evidence="1">
    <location>
        <begin position="86"/>
        <end position="106"/>
    </location>
</feature>
<feature type="transmembrane region" description="Helical" evidence="1">
    <location>
        <begin position="122"/>
        <end position="142"/>
    </location>
</feature>
<feature type="transmembrane region" description="Helical" evidence="1">
    <location>
        <begin position="153"/>
        <end position="173"/>
    </location>
</feature>
<feature type="transmembrane region" description="Helical" evidence="1">
    <location>
        <begin position="185"/>
        <end position="205"/>
    </location>
</feature>
<organism>
    <name type="scientific">Vibrio cholerae serotype O1 (strain ATCC 39315 / El Tor Inaba N16961)</name>
    <dbReference type="NCBI Taxonomy" id="243277"/>
    <lineage>
        <taxon>Bacteria</taxon>
        <taxon>Pseudomonadati</taxon>
        <taxon>Pseudomonadota</taxon>
        <taxon>Gammaproteobacteria</taxon>
        <taxon>Vibrionales</taxon>
        <taxon>Vibrionaceae</taxon>
        <taxon>Vibrio</taxon>
    </lineage>
</organism>
<gene>
    <name type="ordered locus">VC_2382</name>
</gene>
<proteinExistence type="inferred from homology"/>
<dbReference type="EMBL" id="AE003852">
    <property type="protein sequence ID" value="AAF95525.1"/>
    <property type="molecule type" value="Genomic_DNA"/>
</dbReference>
<dbReference type="EMBL" id="X61384">
    <property type="protein sequence ID" value="CAA43657.1"/>
    <property type="status" value="ALT_FRAME"/>
    <property type="molecule type" value="Genomic_DNA"/>
</dbReference>
<dbReference type="PIR" id="D82084">
    <property type="entry name" value="D82084"/>
</dbReference>
<dbReference type="PIR" id="S16386">
    <property type="entry name" value="S16386"/>
</dbReference>
<dbReference type="SMR" id="Q9KPI5"/>
<dbReference type="STRING" id="243277.VC_2382"/>
<dbReference type="DNASU" id="2613051"/>
<dbReference type="EnsemblBacteria" id="AAF95525">
    <property type="protein sequence ID" value="AAF95525"/>
    <property type="gene ID" value="VC_2382"/>
</dbReference>
<dbReference type="KEGG" id="vch:VC_2382"/>
<dbReference type="eggNOG" id="COG2860">
    <property type="taxonomic scope" value="Bacteria"/>
</dbReference>
<dbReference type="HOGENOM" id="CLU_064906_2_1_6"/>
<dbReference type="Proteomes" id="UP000000584">
    <property type="component" value="Chromosome 1"/>
</dbReference>
<dbReference type="GO" id="GO:0005886">
    <property type="term" value="C:plasma membrane"/>
    <property type="evidence" value="ECO:0000318"/>
    <property type="project" value="GO_Central"/>
</dbReference>
<dbReference type="InterPro" id="IPR005115">
    <property type="entry name" value="Gly_transporter"/>
</dbReference>
<dbReference type="PANTHER" id="PTHR30506">
    <property type="entry name" value="INNER MEMBRANE PROTEIN"/>
    <property type="match status" value="1"/>
</dbReference>
<dbReference type="PANTHER" id="PTHR30506:SF3">
    <property type="entry name" value="UPF0126 INNER MEMBRANE PROTEIN YADS-RELATED"/>
    <property type="match status" value="1"/>
</dbReference>
<dbReference type="Pfam" id="PF03458">
    <property type="entry name" value="Gly_transporter"/>
    <property type="match status" value="2"/>
</dbReference>
<accession>Q9KPI5</accession>
<accession>P24544</accession>
<sequence>MHKSSNFSGLNLVKSAPICLLDIFHRCVDSETALDTSLLYLIDMFGTAVFAVSGVLLAGRLKMDPFGVMVLASVTAIGGGTIRDMALGATPVFWIKDTNYLWVIMITCALTMLLVRRPKRLAWWILPVCDAIGLAVFVGIGVEKALIYQDSALIAIIMGVITGCGGGIIRDVLAREIPMVLRSEVYATACIIGGIFHTTALAMGYSSSTALLSGVFSTLLIRLGAIRWHLSLPTFALTK</sequence>
<comment type="subcellular location">
    <subcellularLocation>
        <location evidence="2">Cell membrane</location>
        <topology evidence="2">Multi-pass membrane protein</topology>
    </subcellularLocation>
</comment>
<comment type="similarity">
    <text evidence="2">Belongs to the UPF0126 family.</text>
</comment>
<comment type="caution">
    <text evidence="3">Was originally thought to be recA; but the sequence was incorrectly assigned.</text>
</comment>
<comment type="sequence caution" evidence="2">
    <conflict type="frameshift">
        <sequence resource="EMBL-CDS" id="CAA43657"/>
    </conflict>
</comment>
<name>Y2382_VIBCH</name>
<reference key="1">
    <citation type="journal article" date="2000" name="Nature">
        <title>DNA sequence of both chromosomes of the cholera pathogen Vibrio cholerae.</title>
        <authorList>
            <person name="Heidelberg J.F."/>
            <person name="Eisen J.A."/>
            <person name="Nelson W.C."/>
            <person name="Clayton R.A."/>
            <person name="Gwinn M.L."/>
            <person name="Dodson R.J."/>
            <person name="Haft D.H."/>
            <person name="Hickey E.K."/>
            <person name="Peterson J.D."/>
            <person name="Umayam L.A."/>
            <person name="Gill S.R."/>
            <person name="Nelson K.E."/>
            <person name="Read T.D."/>
            <person name="Tettelin H."/>
            <person name="Richardson D.L."/>
            <person name="Ermolaeva M.D."/>
            <person name="Vamathevan J.J."/>
            <person name="Bass S."/>
            <person name="Qin H."/>
            <person name="Dragoi I."/>
            <person name="Sellers P."/>
            <person name="McDonald L.A."/>
            <person name="Utterback T.R."/>
            <person name="Fleischmann R.D."/>
            <person name="Nierman W.C."/>
            <person name="White O."/>
            <person name="Salzberg S.L."/>
            <person name="Smith H.O."/>
            <person name="Colwell R.R."/>
            <person name="Mekalanos J.J."/>
            <person name="Venter J.C."/>
            <person name="Fraser C.M."/>
        </authorList>
    </citation>
    <scope>NUCLEOTIDE SEQUENCE [LARGE SCALE GENOMIC DNA]</scope>
    <source>
        <strain>ATCC 39315 / El Tor Inaba N16961</strain>
    </source>
</reference>
<reference key="2">
    <citation type="journal article" date="1992" name="Nucleic Acids Res.">
        <title>Nucleotide and deduced amino acid sequence of the recA gene of Vibrio cholerae.</title>
        <authorList>
            <person name="Ghosh S.K."/>
            <person name="Biswas S.K."/>
            <person name="Paul K."/>
            <person name="Das J."/>
        </authorList>
    </citation>
    <scope>PRELIMINARY NUCLEOTIDE SEQUENCE [GENOMIC DNA] OF 64-239</scope>
    <source>
        <strain>ATCC 25870 / Classical Inaba 569B / Serotype O1</strain>
    </source>
</reference>
<protein>
    <recommendedName>
        <fullName>UPF0126 membrane protein VC_2382</fullName>
    </recommendedName>
</protein>